<name>PF23B_DANRE</name>
<comment type="function">
    <text evidence="1">Acts as a negative regulator of autophagy.</text>
</comment>
<comment type="subcellular location">
    <subcellularLocation>
        <location evidence="1">Nucleus</location>
    </subcellularLocation>
    <subcellularLocation>
        <location evidence="1">Cytoplasm</location>
    </subcellularLocation>
</comment>
<comment type="domain">
    <text evidence="1">The PHD-type zinc-finger domain is required for negative regulation of autophagy.</text>
</comment>
<comment type="similarity">
    <text evidence="3">Belongs to the PHF23 family.</text>
</comment>
<comment type="sequence caution" evidence="3">
    <conflict type="frameshift">
        <sequence resource="EMBL-CDS" id="AAH95292"/>
    </conflict>
</comment>
<accession>Q7SXB5</accession>
<accession>Q503K5</accession>
<keyword id="KW-0072">Autophagy</keyword>
<keyword id="KW-0963">Cytoplasm</keyword>
<keyword id="KW-0479">Metal-binding</keyword>
<keyword id="KW-0539">Nucleus</keyword>
<keyword id="KW-1185">Reference proteome</keyword>
<keyword id="KW-0862">Zinc</keyword>
<keyword id="KW-0863">Zinc-finger</keyword>
<gene>
    <name evidence="3" type="primary">phf23b</name>
    <name type="ORF">zgc:110484</name>
    <name type="ORF">zgc:66469</name>
</gene>
<protein>
    <recommendedName>
        <fullName evidence="3">PHD finger protein 23B</fullName>
    </recommendedName>
</protein>
<organism>
    <name type="scientific">Danio rerio</name>
    <name type="common">Zebrafish</name>
    <name type="synonym">Brachydanio rerio</name>
    <dbReference type="NCBI Taxonomy" id="7955"/>
    <lineage>
        <taxon>Eukaryota</taxon>
        <taxon>Metazoa</taxon>
        <taxon>Chordata</taxon>
        <taxon>Craniata</taxon>
        <taxon>Vertebrata</taxon>
        <taxon>Euteleostomi</taxon>
        <taxon>Actinopterygii</taxon>
        <taxon>Neopterygii</taxon>
        <taxon>Teleostei</taxon>
        <taxon>Ostariophysi</taxon>
        <taxon>Cypriniformes</taxon>
        <taxon>Danionidae</taxon>
        <taxon>Danioninae</taxon>
        <taxon>Danio</taxon>
    </lineage>
</organism>
<proteinExistence type="evidence at transcript level"/>
<feature type="chain" id="PRO_0000302834" description="PHD finger protein 23B">
    <location>
        <begin position="1"/>
        <end position="315"/>
    </location>
</feature>
<feature type="zinc finger region" description="PHD-type">
    <location>
        <begin position="258"/>
        <end position="306"/>
    </location>
</feature>
<feature type="region of interest" description="Disordered" evidence="2">
    <location>
        <begin position="51"/>
        <end position="89"/>
    </location>
</feature>
<feature type="region of interest" description="Disordered" evidence="2">
    <location>
        <begin position="135"/>
        <end position="238"/>
    </location>
</feature>
<feature type="compositionally biased region" description="Low complexity" evidence="2">
    <location>
        <begin position="54"/>
        <end position="66"/>
    </location>
</feature>
<feature type="compositionally biased region" description="Polar residues" evidence="2">
    <location>
        <begin position="78"/>
        <end position="89"/>
    </location>
</feature>
<feature type="compositionally biased region" description="Low complexity" evidence="2">
    <location>
        <begin position="151"/>
        <end position="164"/>
    </location>
</feature>
<feature type="compositionally biased region" description="Basic residues" evidence="2">
    <location>
        <begin position="169"/>
        <end position="188"/>
    </location>
</feature>
<feature type="compositionally biased region" description="Basic and acidic residues" evidence="2">
    <location>
        <begin position="190"/>
        <end position="219"/>
    </location>
</feature>
<feature type="sequence conflict" description="In Ref. 1; AAH95292." evidence="3" ref="1">
    <original>V</original>
    <variation>I</variation>
    <location>
        <position position="280"/>
    </location>
</feature>
<reference key="1">
    <citation type="submission" date="2003-08" db="EMBL/GenBank/DDBJ databases">
        <authorList>
            <consortium name="NIH - Zebrafish Gene Collection (ZGC) project"/>
        </authorList>
    </citation>
    <scope>NUCLEOTIDE SEQUENCE [LARGE SCALE MRNA]</scope>
    <source>
        <strain>AB</strain>
        <tissue>Embryo</tissue>
    </source>
</reference>
<sequence length="315" mass="34989">MLEIMSEHQDSLLKCKAETLPSERRKRTVEDFNKFCSFVLAYANYIPSQKEEGPWSPASSSSPNGSGASGEGSVLGGASSNMSPSWNHGTSDLHTIHTFVHKARANKSSKSMRRLSPDGALEDNMCLKDSFYESQAASKAERKKDKKLKRLSLGSGAGDSSSSGGEKRARIKHSKNSKQSKAYKKLKSSAHSESDSENGLGHREERSEHRLQVQVKEEKNEEDEEEAIREADMSSSEGETWIADEDIMVESGDDSWDLITCYCGKPFAGRPMIECSQCNVWVHLSCAKIKKSNVPDIFNCHKCRDSRRSSHKKDS</sequence>
<evidence type="ECO:0000250" key="1">
    <source>
        <dbReference type="UniProtKB" id="Q9BUL5"/>
    </source>
</evidence>
<evidence type="ECO:0000256" key="2">
    <source>
        <dbReference type="SAM" id="MobiDB-lite"/>
    </source>
</evidence>
<evidence type="ECO:0000305" key="3"/>
<dbReference type="EMBL" id="BC055673">
    <property type="protein sequence ID" value="AAH55673.1"/>
    <property type="molecule type" value="mRNA"/>
</dbReference>
<dbReference type="EMBL" id="BC095292">
    <property type="protein sequence ID" value="AAH95292.1"/>
    <property type="status" value="ALT_FRAME"/>
    <property type="molecule type" value="mRNA"/>
</dbReference>
<dbReference type="RefSeq" id="NP_956138.1">
    <property type="nucleotide sequence ID" value="NM_199844.1"/>
</dbReference>
<dbReference type="SMR" id="Q7SXB5"/>
<dbReference type="FunCoup" id="Q7SXB5">
    <property type="interactions" value="1467"/>
</dbReference>
<dbReference type="STRING" id="7955.ENSDARP00000133597"/>
<dbReference type="PaxDb" id="7955-ENSDARP00000107356"/>
<dbReference type="Ensembl" id="ENSDART00000159826">
    <property type="protein sequence ID" value="ENSDARP00000136826"/>
    <property type="gene ID" value="ENSDARG00000036305"/>
</dbReference>
<dbReference type="Ensembl" id="ENSDART00000164050">
    <property type="protein sequence ID" value="ENSDARP00000133597"/>
    <property type="gene ID" value="ENSDARG00000036305"/>
</dbReference>
<dbReference type="GeneID" id="100004597"/>
<dbReference type="KEGG" id="dre:100004597"/>
<dbReference type="AGR" id="ZFIN:ZDB-GENE-030131-5895"/>
<dbReference type="CTD" id="100004597"/>
<dbReference type="ZFIN" id="ZDB-GENE-030131-5895">
    <property type="gene designation" value="phf23b"/>
</dbReference>
<dbReference type="eggNOG" id="KOG1844">
    <property type="taxonomic scope" value="Eukaryota"/>
</dbReference>
<dbReference type="InParanoid" id="Q7SXB5"/>
<dbReference type="OMA" id="KEERAWT"/>
<dbReference type="OrthoDB" id="79252at2759"/>
<dbReference type="PhylomeDB" id="Q7SXB5"/>
<dbReference type="TreeFam" id="TF331373"/>
<dbReference type="PRO" id="PR:Q7SXB5"/>
<dbReference type="Proteomes" id="UP000000437">
    <property type="component" value="Chromosome 7"/>
</dbReference>
<dbReference type="Bgee" id="ENSDARG00000036305">
    <property type="expression patterns" value="Expressed in cleaving embryo and 26 other cell types or tissues"/>
</dbReference>
<dbReference type="GO" id="GO:0005737">
    <property type="term" value="C:cytoplasm"/>
    <property type="evidence" value="ECO:0007669"/>
    <property type="project" value="UniProtKB-SubCell"/>
</dbReference>
<dbReference type="GO" id="GO:0005634">
    <property type="term" value="C:nucleus"/>
    <property type="evidence" value="ECO:0000318"/>
    <property type="project" value="GO_Central"/>
</dbReference>
<dbReference type="GO" id="GO:0008270">
    <property type="term" value="F:zinc ion binding"/>
    <property type="evidence" value="ECO:0007669"/>
    <property type="project" value="UniProtKB-KW"/>
</dbReference>
<dbReference type="GO" id="GO:0006914">
    <property type="term" value="P:autophagy"/>
    <property type="evidence" value="ECO:0007669"/>
    <property type="project" value="UniProtKB-KW"/>
</dbReference>
<dbReference type="GO" id="GO:1902902">
    <property type="term" value="P:negative regulation of autophagosome assembly"/>
    <property type="evidence" value="ECO:0000250"/>
    <property type="project" value="GO_Central"/>
</dbReference>
<dbReference type="GO" id="GO:1901097">
    <property type="term" value="P:negative regulation of autophagosome maturation"/>
    <property type="evidence" value="ECO:0000250"/>
    <property type="project" value="GO_Central"/>
</dbReference>
<dbReference type="GO" id="GO:0031398">
    <property type="term" value="P:positive regulation of protein ubiquitination"/>
    <property type="evidence" value="ECO:0000250"/>
    <property type="project" value="GO_Central"/>
</dbReference>
<dbReference type="CDD" id="cd15631">
    <property type="entry name" value="PHD_PHF23"/>
    <property type="match status" value="1"/>
</dbReference>
<dbReference type="Gene3D" id="3.30.40.10">
    <property type="entry name" value="Zinc/RING finger domain, C3HC4 (zinc finger)"/>
    <property type="match status" value="1"/>
</dbReference>
<dbReference type="InterPro" id="IPR019786">
    <property type="entry name" value="Zinc_finger_PHD-type_CS"/>
</dbReference>
<dbReference type="InterPro" id="IPR011011">
    <property type="entry name" value="Znf_FYVE_PHD"/>
</dbReference>
<dbReference type="InterPro" id="IPR001965">
    <property type="entry name" value="Znf_PHD"/>
</dbReference>
<dbReference type="InterPro" id="IPR019787">
    <property type="entry name" value="Znf_PHD-finger"/>
</dbReference>
<dbReference type="InterPro" id="IPR013083">
    <property type="entry name" value="Znf_RING/FYVE/PHD"/>
</dbReference>
<dbReference type="PANTHER" id="PTHR14571">
    <property type="entry name" value="HISTONE-LYSINE N-METHYLTRANSFERASE SET-26-RELATED"/>
    <property type="match status" value="1"/>
</dbReference>
<dbReference type="PANTHER" id="PTHR14571:SF8">
    <property type="entry name" value="PHD FINGER PROTEIN 23"/>
    <property type="match status" value="1"/>
</dbReference>
<dbReference type="Pfam" id="PF13831">
    <property type="entry name" value="PHD_2"/>
    <property type="match status" value="1"/>
</dbReference>
<dbReference type="SMART" id="SM00249">
    <property type="entry name" value="PHD"/>
    <property type="match status" value="1"/>
</dbReference>
<dbReference type="SUPFAM" id="SSF57903">
    <property type="entry name" value="FYVE/PHD zinc finger"/>
    <property type="match status" value="1"/>
</dbReference>
<dbReference type="PROSITE" id="PS01359">
    <property type="entry name" value="ZF_PHD_1"/>
    <property type="match status" value="1"/>
</dbReference>